<proteinExistence type="inferred from homology"/>
<protein>
    <recommendedName>
        <fullName>Putative late blight resistance protein homolog R1B-14</fullName>
    </recommendedName>
</protein>
<reference key="1">
    <citation type="journal article" date="2005" name="Plant J.">
        <title>The R1 resistance gene cluster contains three groups of independently evolving, type I R1 homologues and shows substantial structural variation among haplotypes of Solanum demissum.</title>
        <authorList>
            <person name="Kuang H."/>
            <person name="Wei F."/>
            <person name="Marano M.R."/>
            <person name="Wirtz U."/>
            <person name="Wang X."/>
            <person name="Liu J."/>
            <person name="Shum W.P."/>
            <person name="Zaborsky J."/>
            <person name="Tallon L.J."/>
            <person name="Rensink W."/>
            <person name="Lobst S."/>
            <person name="Zhang P."/>
            <person name="Tornqvist C.-E."/>
            <person name="Tek A."/>
            <person name="Bamberg J."/>
            <person name="Helgeson J."/>
            <person name="Fry W."/>
            <person name="You F."/>
            <person name="Luo M.-C."/>
            <person name="Jiang J."/>
            <person name="Buell C.R."/>
            <person name="Baker B."/>
        </authorList>
    </citation>
    <scope>NUCLEOTIDE SEQUENCE [GENOMIC DNA]</scope>
</reference>
<evidence type="ECO:0000250" key="1"/>
<evidence type="ECO:0000255" key="2"/>
<evidence type="ECO:0000255" key="3">
    <source>
        <dbReference type="PROSITE-ProRule" id="PRU00280"/>
    </source>
</evidence>
<evidence type="ECO:0000305" key="4"/>
<name>R1B14_SOLDE</name>
<feature type="chain" id="PRO_0000233968" description="Putative late blight resistance protein homolog R1B-14">
    <location>
        <begin position="1"/>
        <end position="1317"/>
    </location>
</feature>
<feature type="domain" description="NB-ARC">
    <location>
        <begin position="521"/>
        <end position="823"/>
    </location>
</feature>
<feature type="repeat" description="LRR 1">
    <location>
        <begin position="944"/>
        <end position="968"/>
    </location>
</feature>
<feature type="repeat" description="LRR 2">
    <location>
        <begin position="987"/>
        <end position="1015"/>
    </location>
</feature>
<feature type="repeat" description="LRR 3">
    <location>
        <begin position="1090"/>
        <end position="1114"/>
    </location>
</feature>
<feature type="repeat" description="LRR 4">
    <location>
        <begin position="1138"/>
        <end position="1161"/>
    </location>
</feature>
<feature type="repeat" description="LRR 5">
    <location>
        <begin position="1164"/>
        <end position="1186"/>
    </location>
</feature>
<feature type="repeat" description="LRR 6">
    <location>
        <begin position="1187"/>
        <end position="1211"/>
    </location>
</feature>
<feature type="domain" description="HMA" evidence="3">
    <location>
        <begin position="1251"/>
        <end position="1317"/>
    </location>
</feature>
<feature type="coiled-coil region" evidence="2">
    <location>
        <begin position="419"/>
        <end position="442"/>
    </location>
</feature>
<feature type="coiled-coil region" evidence="2">
    <location>
        <begin position="535"/>
        <end position="556"/>
    </location>
</feature>
<feature type="binding site" evidence="2">
    <location>
        <begin position="568"/>
        <end position="575"/>
    </location>
    <ligand>
        <name>ATP</name>
        <dbReference type="ChEBI" id="CHEBI:30616"/>
    </ligand>
</feature>
<keyword id="KW-0067">ATP-binding</keyword>
<keyword id="KW-0175">Coiled coil</keyword>
<keyword id="KW-0963">Cytoplasm</keyword>
<keyword id="KW-0381">Hypersensitive response</keyword>
<keyword id="KW-0433">Leucine-rich repeat</keyword>
<keyword id="KW-0472">Membrane</keyword>
<keyword id="KW-0547">Nucleotide-binding</keyword>
<keyword id="KW-0611">Plant defense</keyword>
<keyword id="KW-0677">Repeat</keyword>
<comment type="function">
    <text>Confers resistance to late blight (Phytophthora infestans) races carrying the avirulence gene Avr1. Resistance proteins guard the plant against pathogens that contain an appropriate avirulence protein via an indirect interaction with this avirulence protein. That triggers a defense system including the hypersensitive response, which restricts the pathogen growth.</text>
</comment>
<comment type="subcellular location">
    <subcellularLocation>
        <location evidence="1">Cytoplasm</location>
    </subcellularLocation>
    <subcellularLocation>
        <location evidence="1">Membrane</location>
        <topology evidence="1">Peripheral membrane protein</topology>
    </subcellularLocation>
</comment>
<comment type="miscellaneous">
    <text>This protein is encoded by the haplotype B genome of the allohexaploid Solanum demissum.</text>
</comment>
<comment type="similarity">
    <text evidence="4">Belongs to the disease resistance NB-LRR family.</text>
</comment>
<sequence>MYFNNELSGLKDRFLKSLLAQKYPDRINFFLWELKFLDCFLHLQNFAFASECGMLDVSQKMLKNFKRMCATFRSIRPNAGSDNAFAYLKEVICKRLCATLLNTRPDACSDDGFAYWNEVIWKTKQEFRAKYSFPKTPLASNKVDDDDINIHSPKFVMEFIDAVVGNLNVLVKINDPCSLLFVPGPKEQIDQVSKELKLLRFFVCFVSNKCIEPQYGHTTFYIHALIEASHIAMVVWLHLPVYGNGNQDLAPSEVSRLLSDFISRNSNYIDVLKALKSTIPQAQNKHAAESGIVETPTHNLMVGLSDQMVNLQEMLCLLRDNLIHLPILDLEFHLQDMDSVILDAGLLIYSLYDIEGEKEDTVLDDMNRALGFDLPRNIEPIKVMVYLVMQKAFQCNLPRVHGLGYVDFLLKNLNDFQGRYSDSLAFLKNQLQVIQTEFESLQPFLKVVIEEPHNKLKTLNEDCATQIIRKAYEVEYVVDACINKVAPHWCLERWLLDIIEEITCIKAKIQEKNTVEDTMKTVITHTSSQLARTPRMNEEIVGFKDVIENLRNRLLNGTKGQDVISIHGMPGLGKTTLANRLYSDRSVVSHFDICAQCCVSQVYSYKELLLALLCDAVGDDSARRKHNENKLADKLRKTLLSRRYLILVDDVWDNSAWDDLRGCFPDANNRSRIILTTRHHEVAKYASVHSDPLHLRMFDEDESWKLLEKKVFGEKRCSSLLLKDVGLRIAKMCGQLPLSIVLVAGILSEMEKEVECWEQVANNLGTHIHNDSRAIVNQSYHVLPCHLKSCFLYFGAFLEDEVIDISRLIRLWISESFIKSSEGRRLEDIAEGYLENLIGRNLVMVTQRADSDGKVKACRLHDVLLDFCKERAAEENFLLWINRDQISTKAVYSHKQHAHLAFTEMDNLVEWSASCSLVGSVLFKNPDSYLYSPAFSTSLILLNFKFLKVLDLEHQVVIDFIPTELFYLRYLSASIEQNSIPSSISNLWNLETLILKSTPVGRHNTLLLPSTIWDMVKLRHLHIPKFSPENEEALLENSARLYDLETISTPYFSSVEDAELILRKTPNLRKLICEVECLEYPPQYHVLNFPIRLEILKLYRSKAFKTIPFCISAPNLKYLKLSGFYLDSQYLSETVDHLKHLEVLKLCDLEFGDHREWKVSNGMFPQLKILKLEYLSLMKWIVADDAFPNLEQLVLHGCQDLMEIPSCFMDILSLKYIEVDMSNKSVVKSAKNIEETQVEDNQNTNFKLVIIKKMVLKFDIYQNHDKGRLETFKKLVPLPGVKSVRFDMDEKKVTVTGVMDANEVQLVVSKLRKRGML</sequence>
<gene>
    <name type="primary">R1B-14</name>
    <name type="ORF">PGEC858M02.15</name>
</gene>
<accession>Q6L3Z7</accession>
<dbReference type="EMBL" id="AC149265">
    <property type="protein sequence ID" value="AAT38776.1"/>
    <property type="molecule type" value="Genomic_DNA"/>
</dbReference>
<dbReference type="SMR" id="Q6L3Z7"/>
<dbReference type="GO" id="GO:0005737">
    <property type="term" value="C:cytoplasm"/>
    <property type="evidence" value="ECO:0007669"/>
    <property type="project" value="UniProtKB-SubCell"/>
</dbReference>
<dbReference type="GO" id="GO:0016020">
    <property type="term" value="C:membrane"/>
    <property type="evidence" value="ECO:0007669"/>
    <property type="project" value="UniProtKB-SubCell"/>
</dbReference>
<dbReference type="GO" id="GO:0043531">
    <property type="term" value="F:ADP binding"/>
    <property type="evidence" value="ECO:0007669"/>
    <property type="project" value="InterPro"/>
</dbReference>
<dbReference type="GO" id="GO:0005524">
    <property type="term" value="F:ATP binding"/>
    <property type="evidence" value="ECO:0007669"/>
    <property type="project" value="UniProtKB-KW"/>
</dbReference>
<dbReference type="GO" id="GO:0046872">
    <property type="term" value="F:metal ion binding"/>
    <property type="evidence" value="ECO:0007669"/>
    <property type="project" value="InterPro"/>
</dbReference>
<dbReference type="GO" id="GO:0009626">
    <property type="term" value="P:plant-type hypersensitive response"/>
    <property type="evidence" value="ECO:0007669"/>
    <property type="project" value="UniProtKB-KW"/>
</dbReference>
<dbReference type="CDD" id="cd14798">
    <property type="entry name" value="RX-CC_like"/>
    <property type="match status" value="1"/>
</dbReference>
<dbReference type="FunFam" id="3.40.50.300:FF:001091">
    <property type="entry name" value="Probable disease resistance protein At1g61300"/>
    <property type="match status" value="1"/>
</dbReference>
<dbReference type="FunFam" id="1.10.10.10:FF:000322">
    <property type="entry name" value="Probable disease resistance protein At1g63360"/>
    <property type="match status" value="1"/>
</dbReference>
<dbReference type="Gene3D" id="3.30.70.100">
    <property type="match status" value="1"/>
</dbReference>
<dbReference type="Gene3D" id="1.10.8.430">
    <property type="entry name" value="Helical domain of apoptotic protease-activating factors"/>
    <property type="match status" value="1"/>
</dbReference>
<dbReference type="Gene3D" id="3.40.50.300">
    <property type="entry name" value="P-loop containing nucleotide triphosphate hydrolases"/>
    <property type="match status" value="1"/>
</dbReference>
<dbReference type="Gene3D" id="3.80.10.10">
    <property type="entry name" value="Ribonuclease Inhibitor"/>
    <property type="match status" value="1"/>
</dbReference>
<dbReference type="Gene3D" id="1.10.10.10">
    <property type="entry name" value="Winged helix-like DNA-binding domain superfamily/Winged helix DNA-binding domain"/>
    <property type="match status" value="1"/>
</dbReference>
<dbReference type="InterPro" id="IPR042197">
    <property type="entry name" value="Apaf_helical"/>
</dbReference>
<dbReference type="InterPro" id="IPR044974">
    <property type="entry name" value="Disease_R_plants"/>
</dbReference>
<dbReference type="InterPro" id="IPR006121">
    <property type="entry name" value="HMA_dom"/>
</dbReference>
<dbReference type="InterPro" id="IPR032675">
    <property type="entry name" value="LRR_dom_sf"/>
</dbReference>
<dbReference type="InterPro" id="IPR002182">
    <property type="entry name" value="NB-ARC"/>
</dbReference>
<dbReference type="InterPro" id="IPR027417">
    <property type="entry name" value="P-loop_NTPase"/>
</dbReference>
<dbReference type="InterPro" id="IPR021929">
    <property type="entry name" value="R1A-like_N"/>
</dbReference>
<dbReference type="InterPro" id="IPR038005">
    <property type="entry name" value="RX-like_CC"/>
</dbReference>
<dbReference type="InterPro" id="IPR036388">
    <property type="entry name" value="WH-like_DNA-bd_sf"/>
</dbReference>
<dbReference type="PANTHER" id="PTHR23155:SF1152">
    <property type="entry name" value="AAA+ ATPASE DOMAIN-CONTAINING PROTEIN"/>
    <property type="match status" value="1"/>
</dbReference>
<dbReference type="PANTHER" id="PTHR23155">
    <property type="entry name" value="DISEASE RESISTANCE PROTEIN RP"/>
    <property type="match status" value="1"/>
</dbReference>
<dbReference type="Pfam" id="PF00931">
    <property type="entry name" value="NB-ARC"/>
    <property type="match status" value="1"/>
</dbReference>
<dbReference type="Pfam" id="PF12061">
    <property type="entry name" value="NB-LRR"/>
    <property type="match status" value="1"/>
</dbReference>
<dbReference type="Pfam" id="PF23559">
    <property type="entry name" value="WH_DRP"/>
    <property type="match status" value="1"/>
</dbReference>
<dbReference type="PRINTS" id="PR00364">
    <property type="entry name" value="DISEASERSIST"/>
</dbReference>
<dbReference type="SUPFAM" id="SSF52540">
    <property type="entry name" value="P-loop containing nucleoside triphosphate hydrolases"/>
    <property type="match status" value="1"/>
</dbReference>
<dbReference type="SUPFAM" id="SSF52047">
    <property type="entry name" value="RNI-like"/>
    <property type="match status" value="1"/>
</dbReference>
<dbReference type="PROSITE" id="PS50846">
    <property type="entry name" value="HMA_2"/>
    <property type="match status" value="1"/>
</dbReference>
<organism>
    <name type="scientific">Solanum demissum</name>
    <name type="common">Wild potato</name>
    <dbReference type="NCBI Taxonomy" id="50514"/>
    <lineage>
        <taxon>Eukaryota</taxon>
        <taxon>Viridiplantae</taxon>
        <taxon>Streptophyta</taxon>
        <taxon>Embryophyta</taxon>
        <taxon>Tracheophyta</taxon>
        <taxon>Spermatophyta</taxon>
        <taxon>Magnoliopsida</taxon>
        <taxon>eudicotyledons</taxon>
        <taxon>Gunneridae</taxon>
        <taxon>Pentapetalae</taxon>
        <taxon>asterids</taxon>
        <taxon>lamiids</taxon>
        <taxon>Solanales</taxon>
        <taxon>Solanaceae</taxon>
        <taxon>Solanoideae</taxon>
        <taxon>Solaneae</taxon>
        <taxon>Solanum</taxon>
    </lineage>
</organism>